<evidence type="ECO:0000250" key="1"/>
<evidence type="ECO:0000250" key="2">
    <source>
        <dbReference type="UniProtKB" id="P39831"/>
    </source>
</evidence>
<evidence type="ECO:0000250" key="3">
    <source>
        <dbReference type="UniProtKB" id="Q05016"/>
    </source>
</evidence>
<evidence type="ECO:0000255" key="4">
    <source>
        <dbReference type="PROSITE-ProRule" id="PRU10001"/>
    </source>
</evidence>
<evidence type="ECO:0000305" key="5"/>
<reference key="1">
    <citation type="journal article" date="2001" name="Nature">
        <title>Genome sequence of enterohaemorrhagic Escherichia coli O157:H7.</title>
        <authorList>
            <person name="Perna N.T."/>
            <person name="Plunkett G. III"/>
            <person name="Burland V."/>
            <person name="Mau B."/>
            <person name="Glasner J.D."/>
            <person name="Rose D.J."/>
            <person name="Mayhew G.F."/>
            <person name="Evans P.S."/>
            <person name="Gregor J."/>
            <person name="Kirkpatrick H.A."/>
            <person name="Posfai G."/>
            <person name="Hackett J."/>
            <person name="Klink S."/>
            <person name="Boutin A."/>
            <person name="Shao Y."/>
            <person name="Miller L."/>
            <person name="Grotbeck E.J."/>
            <person name="Davis N.W."/>
            <person name="Lim A."/>
            <person name="Dimalanta E.T."/>
            <person name="Potamousis K."/>
            <person name="Apodaca J."/>
            <person name="Anantharaman T.S."/>
            <person name="Lin J."/>
            <person name="Yen G."/>
            <person name="Schwartz D.C."/>
            <person name="Welch R.A."/>
            <person name="Blattner F.R."/>
        </authorList>
    </citation>
    <scope>NUCLEOTIDE SEQUENCE [LARGE SCALE GENOMIC DNA]</scope>
    <source>
        <strain>O157:H7 / EDL933 / ATCC 700927 / EHEC</strain>
    </source>
</reference>
<reference key="2">
    <citation type="journal article" date="2001" name="DNA Res.">
        <title>Complete genome sequence of enterohemorrhagic Escherichia coli O157:H7 and genomic comparison with a laboratory strain K-12.</title>
        <authorList>
            <person name="Hayashi T."/>
            <person name="Makino K."/>
            <person name="Ohnishi M."/>
            <person name="Kurokawa K."/>
            <person name="Ishii K."/>
            <person name="Yokoyama K."/>
            <person name="Han C.-G."/>
            <person name="Ohtsubo E."/>
            <person name="Nakayama K."/>
            <person name="Murata T."/>
            <person name="Tanaka M."/>
            <person name="Tobe T."/>
            <person name="Iida T."/>
            <person name="Takami H."/>
            <person name="Honda T."/>
            <person name="Sasakawa C."/>
            <person name="Ogasawara N."/>
            <person name="Yasunaga T."/>
            <person name="Kuhara S."/>
            <person name="Shiba T."/>
            <person name="Hattori M."/>
            <person name="Shinagawa H."/>
        </authorList>
    </citation>
    <scope>NUCLEOTIDE SEQUENCE [LARGE SCALE GENOMIC DNA]</scope>
    <source>
        <strain>O157:H7 / Sakai / RIMD 0509952 / EHEC</strain>
    </source>
</reference>
<comment type="function">
    <text evidence="2">NADP-dependent dehydrogenase with broad substrate specificity acting on 3-hydroxy acids. Catalyzes the NADP-dependent oxidation of L-allo-threonine to L-2-amino-3-keto-butyrate, which is spontaneously decarboxylated into aminoacetone. Also acts on D-threonine, L-serine, D-serine, D-3-hydroxyisobutyrate, L-3-hydroxyisobutyrate, D-glycerate and L-glycerate. Able to catalyze the reduction of the malonic semialdehyde to 3-hydroxypropionic acid. YdfG is apparently supplementing RutE, the presumed malonic semialdehyde reductase involved in pyrimidine degradation since both are able to detoxify malonic semialdehyde.</text>
</comment>
<comment type="catalytic activity">
    <reaction evidence="2">
        <text>3-hydroxypropanoate + NADP(+) = 3-oxopropanoate + NADPH + H(+)</text>
        <dbReference type="Rhea" id="RHEA:26438"/>
        <dbReference type="ChEBI" id="CHEBI:15378"/>
        <dbReference type="ChEBI" id="CHEBI:16510"/>
        <dbReference type="ChEBI" id="CHEBI:33190"/>
        <dbReference type="ChEBI" id="CHEBI:57783"/>
        <dbReference type="ChEBI" id="CHEBI:58349"/>
        <dbReference type="EC" id="1.1.1.298"/>
    </reaction>
</comment>
<comment type="catalytic activity">
    <reaction evidence="2">
        <text>L-allo-threonine + NADP(+) = aminoacetone + CO2 + NADPH</text>
        <dbReference type="Rhea" id="RHEA:43524"/>
        <dbReference type="ChEBI" id="CHEBI:16526"/>
        <dbReference type="ChEBI" id="CHEBI:57783"/>
        <dbReference type="ChEBI" id="CHEBI:58320"/>
        <dbReference type="ChEBI" id="CHEBI:58349"/>
        <dbReference type="ChEBI" id="CHEBI:58585"/>
        <dbReference type="EC" id="1.1.1.381"/>
    </reaction>
</comment>
<comment type="subunit">
    <text evidence="2">Homotetramer.</text>
</comment>
<comment type="similarity">
    <text evidence="5">Belongs to the short-chain dehydrogenases/reductases (SDR) family.</text>
</comment>
<proteinExistence type="inferred from homology"/>
<feature type="chain" id="PRO_0000054827" description="NADP-dependent 3-hydroxy acid dehydrogenase YdfG">
    <location>
        <begin position="1"/>
        <end position="248"/>
    </location>
</feature>
<feature type="active site" description="Proton acceptor" evidence="4">
    <location>
        <position position="147"/>
    </location>
</feature>
<feature type="binding site" evidence="3">
    <location>
        <begin position="7"/>
        <end position="12"/>
    </location>
    <ligand>
        <name>NADP(+)</name>
        <dbReference type="ChEBI" id="CHEBI:58349"/>
    </ligand>
</feature>
<feature type="binding site" evidence="3">
    <location>
        <begin position="32"/>
        <end position="33"/>
    </location>
    <ligand>
        <name>NADP(+)</name>
        <dbReference type="ChEBI" id="CHEBI:58349"/>
    </ligand>
</feature>
<feature type="binding site" evidence="3">
    <location>
        <begin position="54"/>
        <end position="55"/>
    </location>
    <ligand>
        <name>NADP(+)</name>
        <dbReference type="ChEBI" id="CHEBI:58349"/>
    </ligand>
</feature>
<feature type="binding site" evidence="3">
    <location>
        <position position="81"/>
    </location>
    <ligand>
        <name>NADP(+)</name>
        <dbReference type="ChEBI" id="CHEBI:58349"/>
    </ligand>
</feature>
<feature type="binding site" evidence="1">
    <location>
        <position position="134"/>
    </location>
    <ligand>
        <name>substrate</name>
    </ligand>
</feature>
<feature type="binding site" evidence="3">
    <location>
        <position position="147"/>
    </location>
    <ligand>
        <name>NADP(+)</name>
        <dbReference type="ChEBI" id="CHEBI:58349"/>
    </ligand>
</feature>
<feature type="binding site" evidence="3">
    <location>
        <position position="151"/>
    </location>
    <ligand>
        <name>NADP(+)</name>
        <dbReference type="ChEBI" id="CHEBI:58349"/>
    </ligand>
</feature>
<feature type="binding site" evidence="3">
    <location>
        <begin position="177"/>
        <end position="185"/>
    </location>
    <ligand>
        <name>NADP(+)</name>
        <dbReference type="ChEBI" id="CHEBI:58349"/>
    </ligand>
</feature>
<organism>
    <name type="scientific">Escherichia coli O157:H7</name>
    <dbReference type="NCBI Taxonomy" id="83334"/>
    <lineage>
        <taxon>Bacteria</taxon>
        <taxon>Pseudomonadati</taxon>
        <taxon>Pseudomonadota</taxon>
        <taxon>Gammaproteobacteria</taxon>
        <taxon>Enterobacterales</taxon>
        <taxon>Enterobacteriaceae</taxon>
        <taxon>Escherichia</taxon>
    </lineage>
</organism>
<gene>
    <name evidence="2" type="primary">ydfG</name>
    <name type="ordered locus">Z2158</name>
    <name type="ordered locus">ECs2148</name>
</gene>
<name>YDFG_ECO57</name>
<protein>
    <recommendedName>
        <fullName evidence="2">NADP-dependent 3-hydroxy acid dehydrogenase YdfG</fullName>
    </recommendedName>
    <alternativeName>
        <fullName evidence="2">L-allo-threonine dehydrogenase</fullName>
        <ecNumber evidence="2">1.1.1.381</ecNumber>
    </alternativeName>
    <alternativeName>
        <fullName evidence="2">Malonic semialdehyde reductase</fullName>
        <ecNumber evidence="2">1.1.1.298</ecNumber>
    </alternativeName>
</protein>
<sequence>MIVLVTGATAGFGECITRRFIQQGHKVIATGRRQERLQELKDELGDNLYIAQLDVRNRAAIEEMLASLPAEWCNIDILVNNAGLALGMEPAHKASIEDWETMIDTNNKGLVYMTRAVLPGMVERNHGHIINIGSTAGSWPYAGGNVYGATKAFVRQFSLNLRTDLHGTAVRVTDIEPGLVGGTEFSNVRFKGDDGKAEKTYQNTVALTPEDVSEAVWWVSTLPAHVNINTLEMMPVTQSYAGLNVHRQ</sequence>
<dbReference type="EC" id="1.1.1.381" evidence="2"/>
<dbReference type="EC" id="1.1.1.298" evidence="2"/>
<dbReference type="EMBL" id="AE005174">
    <property type="protein sequence ID" value="AAG56223.1"/>
    <property type="molecule type" value="Genomic_DNA"/>
</dbReference>
<dbReference type="EMBL" id="BA000007">
    <property type="protein sequence ID" value="BAB35571.1"/>
    <property type="molecule type" value="Genomic_DNA"/>
</dbReference>
<dbReference type="PIR" id="C85720">
    <property type="entry name" value="C85720"/>
</dbReference>
<dbReference type="PIR" id="D90897">
    <property type="entry name" value="D90897"/>
</dbReference>
<dbReference type="RefSeq" id="NP_310175.1">
    <property type="nucleotide sequence ID" value="NC_002695.1"/>
</dbReference>
<dbReference type="RefSeq" id="WP_000636568.1">
    <property type="nucleotide sequence ID" value="NZ_VOAI01000024.1"/>
</dbReference>
<dbReference type="SMR" id="Q8X505"/>
<dbReference type="STRING" id="155864.Z2158"/>
<dbReference type="GeneID" id="917355"/>
<dbReference type="KEGG" id="ece:Z2158"/>
<dbReference type="KEGG" id="ecs:ECs_2148"/>
<dbReference type="PATRIC" id="fig|386585.9.peg.2256"/>
<dbReference type="eggNOG" id="COG4221">
    <property type="taxonomic scope" value="Bacteria"/>
</dbReference>
<dbReference type="HOGENOM" id="CLU_010194_2_10_6"/>
<dbReference type="OMA" id="WRWMWET"/>
<dbReference type="Proteomes" id="UP000000558">
    <property type="component" value="Chromosome"/>
</dbReference>
<dbReference type="Proteomes" id="UP000002519">
    <property type="component" value="Chromosome"/>
</dbReference>
<dbReference type="GO" id="GO:0005829">
    <property type="term" value="C:cytosol"/>
    <property type="evidence" value="ECO:0007669"/>
    <property type="project" value="TreeGrafter"/>
</dbReference>
<dbReference type="GO" id="GO:0035527">
    <property type="term" value="F:3-hydroxypropionate dehydrogenase (NADP+) activity"/>
    <property type="evidence" value="ECO:0007669"/>
    <property type="project" value="UniProtKB-EC"/>
</dbReference>
<dbReference type="CDD" id="cd05346">
    <property type="entry name" value="SDR_c5"/>
    <property type="match status" value="1"/>
</dbReference>
<dbReference type="FunFam" id="3.40.50.720:FF:000047">
    <property type="entry name" value="NADP-dependent L-serine/L-allo-threonine dehydrogenase"/>
    <property type="match status" value="1"/>
</dbReference>
<dbReference type="Gene3D" id="3.40.50.720">
    <property type="entry name" value="NAD(P)-binding Rossmann-like Domain"/>
    <property type="match status" value="1"/>
</dbReference>
<dbReference type="InterPro" id="IPR036291">
    <property type="entry name" value="NAD(P)-bd_dom_sf"/>
</dbReference>
<dbReference type="InterPro" id="IPR020904">
    <property type="entry name" value="Sc_DH/Rdtase_CS"/>
</dbReference>
<dbReference type="InterPro" id="IPR002347">
    <property type="entry name" value="SDR_fam"/>
</dbReference>
<dbReference type="NCBIfam" id="NF007829">
    <property type="entry name" value="PRK10538.1"/>
    <property type="match status" value="1"/>
</dbReference>
<dbReference type="PANTHER" id="PTHR43086:SF3">
    <property type="entry name" value="NADP-DEPENDENT 3-HYDROXY ACID DEHYDROGENASE YDFG"/>
    <property type="match status" value="1"/>
</dbReference>
<dbReference type="PANTHER" id="PTHR43086">
    <property type="entry name" value="VERY-LONG-CHAIN 3-OXOOACYL-COA REDUCTASE"/>
    <property type="match status" value="1"/>
</dbReference>
<dbReference type="Pfam" id="PF00106">
    <property type="entry name" value="adh_short"/>
    <property type="match status" value="1"/>
</dbReference>
<dbReference type="PRINTS" id="PR00081">
    <property type="entry name" value="GDHRDH"/>
</dbReference>
<dbReference type="PRINTS" id="PR00080">
    <property type="entry name" value="SDRFAMILY"/>
</dbReference>
<dbReference type="SUPFAM" id="SSF51735">
    <property type="entry name" value="NAD(P)-binding Rossmann-fold domains"/>
    <property type="match status" value="1"/>
</dbReference>
<dbReference type="PROSITE" id="PS00061">
    <property type="entry name" value="ADH_SHORT"/>
    <property type="match status" value="1"/>
</dbReference>
<keyword id="KW-0521">NADP</keyword>
<keyword id="KW-0560">Oxidoreductase</keyword>
<keyword id="KW-1185">Reference proteome</keyword>
<accession>Q8X505</accession>
<accession>Q7ADX9</accession>